<gene>
    <name type="primary">spire2</name>
    <name type="ORF">zgc:103506</name>
</gene>
<evidence type="ECO:0000250" key="1">
    <source>
        <dbReference type="UniProtKB" id="Q08AE8"/>
    </source>
</evidence>
<evidence type="ECO:0000250" key="2">
    <source>
        <dbReference type="UniProtKB" id="Q8K1S6"/>
    </source>
</evidence>
<evidence type="ECO:0000250" key="3">
    <source>
        <dbReference type="UniProtKB" id="Q8WWL2"/>
    </source>
</evidence>
<evidence type="ECO:0000250" key="4">
    <source>
        <dbReference type="UniProtKB" id="Q9U1K1"/>
    </source>
</evidence>
<evidence type="ECO:0000255" key="5">
    <source>
        <dbReference type="PROSITE-ProRule" id="PRU00406"/>
    </source>
</evidence>
<evidence type="ECO:0000255" key="6">
    <source>
        <dbReference type="PROSITE-ProRule" id="PRU00709"/>
    </source>
</evidence>
<evidence type="ECO:0000256" key="7">
    <source>
        <dbReference type="SAM" id="MobiDB-lite"/>
    </source>
</evidence>
<evidence type="ECO:0000305" key="8"/>
<protein>
    <recommendedName>
        <fullName>Protein spire homolog 2</fullName>
        <shortName>Spir-2</shortName>
    </recommendedName>
</protein>
<organism>
    <name type="scientific">Danio rerio</name>
    <name type="common">Zebrafish</name>
    <name type="synonym">Brachydanio rerio</name>
    <dbReference type="NCBI Taxonomy" id="7955"/>
    <lineage>
        <taxon>Eukaryota</taxon>
        <taxon>Metazoa</taxon>
        <taxon>Chordata</taxon>
        <taxon>Craniata</taxon>
        <taxon>Vertebrata</taxon>
        <taxon>Euteleostomi</taxon>
        <taxon>Actinopterygii</taxon>
        <taxon>Neopterygii</taxon>
        <taxon>Teleostei</taxon>
        <taxon>Ostariophysi</taxon>
        <taxon>Cypriniformes</taxon>
        <taxon>Danionidae</taxon>
        <taxon>Danioninae</taxon>
        <taxon>Danio</taxon>
    </lineage>
</organism>
<reference key="1">
    <citation type="submission" date="2004-11" db="EMBL/GenBank/DDBJ databases">
        <authorList>
            <consortium name="NIH - Zebrafish Gene Collection (ZGC) project"/>
        </authorList>
    </citation>
    <scope>NUCLEOTIDE SEQUENCE [LARGE SCALE MRNA]</scope>
    <source>
        <tissue>Ovary</tissue>
    </source>
</reference>
<sequence length="606" mass="68134">MARSADRSAEDGDSRAGIRELSLEEVLKSYEQPINEEQAWAVCFQCCGDLRAPRPQPHPRRPELQIRDPASIILHRDGRVTALLQSCDDSNAGCESAADGKLVQSLGVAIYRALDWGLDDSEERELSPQLEQLIEFMVGGPDCGQSKHCGSNAAKDEGYSGQDEEEEEEEEEEEEGAGRGIHTVQQVMTMCASRLANPVLAPEHYQAVCRALFLETLELQTFLSRIRDAKEMLKKIRKEEPQEDSAAELDALQHTDWARLWVQLMKELRQGVKLKKVEEQPFNPLPTEFSLTPFEMLMQDIRLRKYKLRKVVVDGNIPTCVKRNAHELILDFIRSRPPLKPVSERSLPPPPQRPQSLHDRVLAEIRQDHKLRPVELPSSKRSFGSLPCLAHTCQCDIKSTSCIDLSVTGAGSRPSSRIRVLLKAPTLAEMEEMNIFEDEDSPDGVDMRRVESSPTPLKRDRSFSEHDLDELRGEMMSDSPQHSGVAALRAERPRSHTLTGVYQASFPGFERRSASTCRSLSSDDRSSDPGGDSASHGLSRHQWMEEFCHPVETLALTVDGVINVRRILVKAEMEKYMQNKELFSNLKKGKVCVSLSYMIDISPTAQ</sequence>
<accession>Q5U3H9</accession>
<comment type="function">
    <text evidence="2 3">Acts as an actin nucleation factor, remains associated with the slow-growing pointed end of the new filament. Involved in intracellular vesicle transport along actin fibers, providing a novel link between actin cytoskeleton dynamics and intracellular transport. Required for asymmetric spindle positioning and asymmetric cell division during oocyte meiosis. Required for normal formation of the cleavage furrow and for polar body extrusion during female germ cell meiosis (By similarity). Also acts in the nucleus: together with SPIRE1 and SPIRE2, promotes assembly of nuclear actin filaments in response to DNA damage in order to facilitate movement of chromatin and repair factors after DNA damage (By similarity).</text>
</comment>
<comment type="subcellular location">
    <subcellularLocation>
        <location evidence="2">Cytoplasm</location>
        <location evidence="2">Cytoskeleton</location>
    </subcellularLocation>
    <subcellularLocation>
        <location evidence="2">Cytoplasm</location>
        <location evidence="2">Cytosol</location>
    </subcellularLocation>
    <subcellularLocation>
        <location evidence="2">Cell membrane</location>
        <topology evidence="2">Peripheral membrane protein</topology>
        <orientation evidence="2">Cytoplasmic side</orientation>
    </subcellularLocation>
    <subcellularLocation>
        <location evidence="2">Cytoplasmic vesicle membrane</location>
        <topology evidence="2">Peripheral membrane protein</topology>
        <orientation evidence="2">Cytoplasmic side</orientation>
    </subcellularLocation>
</comment>
<comment type="domain">
    <text evidence="4">Binds to actin monomers via the WH2 domain.</text>
</comment>
<comment type="domain">
    <text evidence="1">The Spir-box targets binding to intracellular membrane structures.</text>
</comment>
<comment type="similarity">
    <text evidence="8">Belongs to the spire family.</text>
</comment>
<proteinExistence type="evidence at transcript level"/>
<keyword id="KW-0009">Actin-binding</keyword>
<keyword id="KW-1003">Cell membrane</keyword>
<keyword id="KW-0963">Cytoplasm</keyword>
<keyword id="KW-0968">Cytoplasmic vesicle</keyword>
<keyword id="KW-0206">Cytoskeleton</keyword>
<keyword id="KW-0472">Membrane</keyword>
<keyword id="KW-0653">Protein transport</keyword>
<keyword id="KW-1185">Reference proteome</keyword>
<keyword id="KW-0677">Repeat</keyword>
<keyword id="KW-0813">Transport</keyword>
<name>SPIR2_DANRE</name>
<feature type="chain" id="PRO_0000320025" description="Protein spire homolog 2">
    <location>
        <begin position="1"/>
        <end position="606"/>
    </location>
</feature>
<feature type="domain" description="KIND" evidence="6">
    <location>
        <begin position="21"/>
        <end position="219"/>
    </location>
</feature>
<feature type="domain" description="WH2 1" evidence="5">
    <location>
        <begin position="263"/>
        <end position="277"/>
    </location>
</feature>
<feature type="domain" description="WH2 2" evidence="5">
    <location>
        <begin position="357"/>
        <end position="374"/>
    </location>
</feature>
<feature type="region of interest" description="Disordered" evidence="7">
    <location>
        <begin position="147"/>
        <end position="181"/>
    </location>
</feature>
<feature type="region of interest" description="Disordered" evidence="7">
    <location>
        <begin position="438"/>
        <end position="464"/>
    </location>
</feature>
<feature type="region of interest" description="Disordered" evidence="7">
    <location>
        <begin position="517"/>
        <end position="537"/>
    </location>
</feature>
<feature type="region of interest" description="Spir-box">
    <location>
        <begin position="554"/>
        <end position="574"/>
    </location>
</feature>
<feature type="compositionally biased region" description="Acidic residues" evidence="7">
    <location>
        <begin position="162"/>
        <end position="175"/>
    </location>
</feature>
<feature type="compositionally biased region" description="Basic and acidic residues" evidence="7">
    <location>
        <begin position="445"/>
        <end position="464"/>
    </location>
</feature>
<dbReference type="EMBL" id="BC085537">
    <property type="protein sequence ID" value="AAH85537.1"/>
    <property type="molecule type" value="mRNA"/>
</dbReference>
<dbReference type="SMR" id="Q5U3H9"/>
<dbReference type="FunCoup" id="Q5U3H9">
    <property type="interactions" value="522"/>
</dbReference>
<dbReference type="STRING" id="7955.ENSDARP00000031129"/>
<dbReference type="PaxDb" id="7955-ENSDARP00000031129"/>
<dbReference type="AGR" id="ZFIN:ZDB-GENE-041114-29"/>
<dbReference type="ZFIN" id="ZDB-GENE-041114-29">
    <property type="gene designation" value="spire2"/>
</dbReference>
<dbReference type="eggNOG" id="ENOG502QQPN">
    <property type="taxonomic scope" value="Eukaryota"/>
</dbReference>
<dbReference type="InParanoid" id="Q5U3H9"/>
<dbReference type="PhylomeDB" id="Q5U3H9"/>
<dbReference type="PRO" id="PR:Q5U3H9"/>
<dbReference type="Proteomes" id="UP000000437">
    <property type="component" value="Unplaced"/>
</dbReference>
<dbReference type="GO" id="GO:0005938">
    <property type="term" value="C:cell cortex"/>
    <property type="evidence" value="ECO:0000318"/>
    <property type="project" value="GO_Central"/>
</dbReference>
<dbReference type="GO" id="GO:0030659">
    <property type="term" value="C:cytoplasmic vesicle membrane"/>
    <property type="evidence" value="ECO:0000318"/>
    <property type="project" value="GO_Central"/>
</dbReference>
<dbReference type="GO" id="GO:0005856">
    <property type="term" value="C:cytoskeleton"/>
    <property type="evidence" value="ECO:0007669"/>
    <property type="project" value="UniProtKB-SubCell"/>
</dbReference>
<dbReference type="GO" id="GO:0005829">
    <property type="term" value="C:cytosol"/>
    <property type="evidence" value="ECO:0007669"/>
    <property type="project" value="UniProtKB-SubCell"/>
</dbReference>
<dbReference type="GO" id="GO:0005886">
    <property type="term" value="C:plasma membrane"/>
    <property type="evidence" value="ECO:0007669"/>
    <property type="project" value="UniProtKB-SubCell"/>
</dbReference>
<dbReference type="GO" id="GO:0003779">
    <property type="term" value="F:actin binding"/>
    <property type="evidence" value="ECO:0007669"/>
    <property type="project" value="UniProtKB-KW"/>
</dbReference>
<dbReference type="GO" id="GO:0008017">
    <property type="term" value="F:microtubule binding"/>
    <property type="evidence" value="ECO:0000318"/>
    <property type="project" value="GO_Central"/>
</dbReference>
<dbReference type="GO" id="GO:0051639">
    <property type="term" value="P:actin filament network formation"/>
    <property type="evidence" value="ECO:0000318"/>
    <property type="project" value="GO_Central"/>
</dbReference>
<dbReference type="GO" id="GO:0045010">
    <property type="term" value="P:actin nucleation"/>
    <property type="evidence" value="ECO:0007669"/>
    <property type="project" value="InterPro"/>
</dbReference>
<dbReference type="GO" id="GO:0036089">
    <property type="term" value="P:cleavage furrow formation"/>
    <property type="evidence" value="ECO:0000318"/>
    <property type="project" value="GO_Central"/>
</dbReference>
<dbReference type="GO" id="GO:0051295">
    <property type="term" value="P:establishment of meiotic spindle localization"/>
    <property type="evidence" value="ECO:0000318"/>
    <property type="project" value="GO_Central"/>
</dbReference>
<dbReference type="GO" id="GO:0070649">
    <property type="term" value="P:formin-nucleated actin cable assembly"/>
    <property type="evidence" value="ECO:0000250"/>
    <property type="project" value="UniProtKB"/>
</dbReference>
<dbReference type="GO" id="GO:0048193">
    <property type="term" value="P:Golgi vesicle transport"/>
    <property type="evidence" value="ECO:0000318"/>
    <property type="project" value="GO_Central"/>
</dbReference>
<dbReference type="GO" id="GO:0046907">
    <property type="term" value="P:intracellular transport"/>
    <property type="evidence" value="ECO:0000318"/>
    <property type="project" value="GO_Central"/>
</dbReference>
<dbReference type="GO" id="GO:0040038">
    <property type="term" value="P:polar body extrusion after meiotic divisions"/>
    <property type="evidence" value="ECO:0000318"/>
    <property type="project" value="GO_Central"/>
</dbReference>
<dbReference type="GO" id="GO:2000781">
    <property type="term" value="P:positive regulation of double-strand break repair"/>
    <property type="evidence" value="ECO:0000250"/>
    <property type="project" value="UniProtKB"/>
</dbReference>
<dbReference type="GO" id="GO:0015031">
    <property type="term" value="P:protein transport"/>
    <property type="evidence" value="ECO:0007669"/>
    <property type="project" value="UniProtKB-KW"/>
</dbReference>
<dbReference type="CDD" id="cd22186">
    <property type="entry name" value="WH2_Spire1-2_r3"/>
    <property type="match status" value="1"/>
</dbReference>
<dbReference type="CDD" id="cd22080">
    <property type="entry name" value="WH2_Spire1_r4"/>
    <property type="match status" value="1"/>
</dbReference>
<dbReference type="CDD" id="cd22079">
    <property type="entry name" value="WH2_Spire2_r2"/>
    <property type="match status" value="1"/>
</dbReference>
<dbReference type="CDD" id="cd22065">
    <property type="entry name" value="WH2_Spire_1-2_r1"/>
    <property type="match status" value="1"/>
</dbReference>
<dbReference type="FunFam" id="1.10.510.10:FF:000455">
    <property type="entry name" value="protein spire homolog 1 isoform X1"/>
    <property type="match status" value="1"/>
</dbReference>
<dbReference type="Gene3D" id="1.10.510.10">
    <property type="entry name" value="Transferase(Phosphotransferase) domain 1"/>
    <property type="match status" value="1"/>
</dbReference>
<dbReference type="InterPro" id="IPR011019">
    <property type="entry name" value="KIND_dom"/>
</dbReference>
<dbReference type="InterPro" id="IPR029901">
    <property type="entry name" value="Spire"/>
</dbReference>
<dbReference type="InterPro" id="IPR003124">
    <property type="entry name" value="WH2_dom"/>
</dbReference>
<dbReference type="PANTHER" id="PTHR21345:SF5">
    <property type="entry name" value="PROTEIN SPIRE HOMOLOG 2"/>
    <property type="match status" value="1"/>
</dbReference>
<dbReference type="PANTHER" id="PTHR21345">
    <property type="entry name" value="SPIRE"/>
    <property type="match status" value="1"/>
</dbReference>
<dbReference type="Pfam" id="PF16474">
    <property type="entry name" value="KIND"/>
    <property type="match status" value="1"/>
</dbReference>
<dbReference type="SMART" id="SM00750">
    <property type="entry name" value="KIND"/>
    <property type="match status" value="1"/>
</dbReference>
<dbReference type="SMART" id="SM00246">
    <property type="entry name" value="WH2"/>
    <property type="match status" value="4"/>
</dbReference>
<dbReference type="PROSITE" id="PS51377">
    <property type="entry name" value="KIND"/>
    <property type="match status" value="1"/>
</dbReference>
<dbReference type="PROSITE" id="PS51082">
    <property type="entry name" value="WH2"/>
    <property type="match status" value="2"/>
</dbReference>